<name>HRCA_BIFA0</name>
<evidence type="ECO:0000255" key="1">
    <source>
        <dbReference type="HAMAP-Rule" id="MF_00081"/>
    </source>
</evidence>
<evidence type="ECO:0000256" key="2">
    <source>
        <dbReference type="SAM" id="MobiDB-lite"/>
    </source>
</evidence>
<proteinExistence type="inferred from homology"/>
<feature type="chain" id="PRO_1000118290" description="Heat-inducible transcription repressor HrcA">
    <location>
        <begin position="1"/>
        <end position="366"/>
    </location>
</feature>
<feature type="region of interest" description="Disordered" evidence="2">
    <location>
        <begin position="298"/>
        <end position="318"/>
    </location>
</feature>
<feature type="compositionally biased region" description="Polar residues" evidence="2">
    <location>
        <begin position="298"/>
        <end position="309"/>
    </location>
</feature>
<accession>B8DUG2</accession>
<gene>
    <name evidence="1" type="primary">hrcA</name>
    <name type="ordered locus">BLA_1356</name>
</gene>
<reference key="1">
    <citation type="journal article" date="2009" name="J. Bacteriol.">
        <title>Genome sequence of the probiotic bacterium Bifidobacterium animalis subsp. lactis AD011.</title>
        <authorList>
            <person name="Kim J.F."/>
            <person name="Jeong H."/>
            <person name="Yu D.S."/>
            <person name="Choi S.-H."/>
            <person name="Hur C.-G."/>
            <person name="Park M.-S."/>
            <person name="Yoon S.H."/>
            <person name="Kim D.-W."/>
            <person name="Ji G.E."/>
            <person name="Park H.-S."/>
            <person name="Oh T.K."/>
        </authorList>
    </citation>
    <scope>NUCLEOTIDE SEQUENCE [LARGE SCALE GENOMIC DNA]</scope>
    <source>
        <strain>AD011</strain>
    </source>
</reference>
<keyword id="KW-1185">Reference proteome</keyword>
<keyword id="KW-0678">Repressor</keyword>
<keyword id="KW-0346">Stress response</keyword>
<keyword id="KW-0804">Transcription</keyword>
<keyword id="KW-0805">Transcription regulation</keyword>
<protein>
    <recommendedName>
        <fullName evidence="1">Heat-inducible transcription repressor HrcA</fullName>
    </recommendedName>
</protein>
<organism>
    <name type="scientific">Bifidobacterium animalis subsp. lactis (strain AD011)</name>
    <dbReference type="NCBI Taxonomy" id="442563"/>
    <lineage>
        <taxon>Bacteria</taxon>
        <taxon>Bacillati</taxon>
        <taxon>Actinomycetota</taxon>
        <taxon>Actinomycetes</taxon>
        <taxon>Bifidobacteriales</taxon>
        <taxon>Bifidobacteriaceae</taxon>
        <taxon>Bifidobacterium</taxon>
    </lineage>
</organism>
<dbReference type="EMBL" id="CP001213">
    <property type="protein sequence ID" value="ACL29641.1"/>
    <property type="molecule type" value="Genomic_DNA"/>
</dbReference>
<dbReference type="RefSeq" id="WP_004217935.1">
    <property type="nucleotide sequence ID" value="NC_011835.1"/>
</dbReference>
<dbReference type="SMR" id="B8DUG2"/>
<dbReference type="STRING" id="442563.BLA_1356"/>
<dbReference type="GeneID" id="29696276"/>
<dbReference type="KEGG" id="bla:BLA_1356"/>
<dbReference type="HOGENOM" id="CLU_050019_2_0_11"/>
<dbReference type="Proteomes" id="UP000002456">
    <property type="component" value="Chromosome"/>
</dbReference>
<dbReference type="GO" id="GO:0003677">
    <property type="term" value="F:DNA binding"/>
    <property type="evidence" value="ECO:0007669"/>
    <property type="project" value="InterPro"/>
</dbReference>
<dbReference type="GO" id="GO:0003700">
    <property type="term" value="F:DNA-binding transcription factor activity"/>
    <property type="evidence" value="ECO:0007669"/>
    <property type="project" value="InterPro"/>
</dbReference>
<dbReference type="GO" id="GO:0045892">
    <property type="term" value="P:negative regulation of DNA-templated transcription"/>
    <property type="evidence" value="ECO:0007669"/>
    <property type="project" value="UniProtKB-UniRule"/>
</dbReference>
<dbReference type="FunFam" id="1.10.10.10:FF:000049">
    <property type="entry name" value="Heat-inducible transcription repressor HrcA"/>
    <property type="match status" value="1"/>
</dbReference>
<dbReference type="Gene3D" id="3.30.450.40">
    <property type="match status" value="1"/>
</dbReference>
<dbReference type="Gene3D" id="3.30.390.60">
    <property type="entry name" value="Heat-inducible transcription repressor hrca homolog, domain 3"/>
    <property type="match status" value="1"/>
</dbReference>
<dbReference type="Gene3D" id="1.10.10.10">
    <property type="entry name" value="Winged helix-like DNA-binding domain superfamily/Winged helix DNA-binding domain"/>
    <property type="match status" value="1"/>
</dbReference>
<dbReference type="HAMAP" id="MF_00081">
    <property type="entry name" value="HrcA"/>
    <property type="match status" value="1"/>
</dbReference>
<dbReference type="InterPro" id="IPR001034">
    <property type="entry name" value="DeoR_HTH"/>
</dbReference>
<dbReference type="InterPro" id="IPR029016">
    <property type="entry name" value="GAF-like_dom_sf"/>
</dbReference>
<dbReference type="InterPro" id="IPR002571">
    <property type="entry name" value="HrcA"/>
</dbReference>
<dbReference type="InterPro" id="IPR021153">
    <property type="entry name" value="HrcA_C"/>
</dbReference>
<dbReference type="InterPro" id="IPR036388">
    <property type="entry name" value="WH-like_DNA-bd_sf"/>
</dbReference>
<dbReference type="InterPro" id="IPR036390">
    <property type="entry name" value="WH_DNA-bd_sf"/>
</dbReference>
<dbReference type="InterPro" id="IPR023120">
    <property type="entry name" value="WHTH_transcript_rep_HrcA_IDD"/>
</dbReference>
<dbReference type="NCBIfam" id="TIGR00331">
    <property type="entry name" value="hrcA"/>
    <property type="match status" value="1"/>
</dbReference>
<dbReference type="PANTHER" id="PTHR34824">
    <property type="entry name" value="HEAT-INDUCIBLE TRANSCRIPTION REPRESSOR HRCA"/>
    <property type="match status" value="1"/>
</dbReference>
<dbReference type="PANTHER" id="PTHR34824:SF1">
    <property type="entry name" value="HEAT-INDUCIBLE TRANSCRIPTION REPRESSOR HRCA"/>
    <property type="match status" value="1"/>
</dbReference>
<dbReference type="Pfam" id="PF01628">
    <property type="entry name" value="HrcA"/>
    <property type="match status" value="1"/>
</dbReference>
<dbReference type="Pfam" id="PF08220">
    <property type="entry name" value="HTH_DeoR"/>
    <property type="match status" value="1"/>
</dbReference>
<dbReference type="PIRSF" id="PIRSF005485">
    <property type="entry name" value="HrcA"/>
    <property type="match status" value="1"/>
</dbReference>
<dbReference type="SUPFAM" id="SSF55781">
    <property type="entry name" value="GAF domain-like"/>
    <property type="match status" value="1"/>
</dbReference>
<dbReference type="SUPFAM" id="SSF46785">
    <property type="entry name" value="Winged helix' DNA-binding domain"/>
    <property type="match status" value="1"/>
</dbReference>
<sequence>MSSTRRMQILRAVVEDYIRQQEPIGSGALAAKHHLGVSPATIRNDMAALEDEGYLTQPHTSAGRIPTEKGYRYFVNSLSTPIPLTAEQRESISSALSGSASLQDTLQRAARILSTITGQYAMVSAPSLSRSLMRHVELLPLAAHTLLLVTITETGRVVQRLVSTDTLPNTEQTQCICETINTHCRLLTFRQCAQSIRTLPTDSEGGFTPQLRDAIAAVFSDMENEERPNELFTSGAASLTHQHIDAASLAPLFDALEEQVVLMRLMYDLTGQPGQEGVGVAIGSETHTPGLLHASVVSSGYGQSSTPSANVEHEEYDTGTKPTMPIAVIGSIGPTHMNYAVTMAAVHAVSRYLTEFLRVGHNGWQE</sequence>
<comment type="function">
    <text evidence="1">Negative regulator of class I heat shock genes (grpE-dnaK-dnaJ and groELS operons). Prevents heat-shock induction of these operons.</text>
</comment>
<comment type="similarity">
    <text evidence="1">Belongs to the HrcA family.</text>
</comment>